<accession>B5F0X7</accession>
<keyword id="KW-0004">4Fe-4S</keyword>
<keyword id="KW-0963">Cytoplasm</keyword>
<keyword id="KW-0408">Iron</keyword>
<keyword id="KW-0411">Iron-sulfur</keyword>
<keyword id="KW-0479">Metal-binding</keyword>
<keyword id="KW-0949">S-adenosyl-L-methionine</keyword>
<keyword id="KW-0808">Transferase</keyword>
<organism>
    <name type="scientific">Salmonella agona (strain SL483)</name>
    <dbReference type="NCBI Taxonomy" id="454166"/>
    <lineage>
        <taxon>Bacteria</taxon>
        <taxon>Pseudomonadati</taxon>
        <taxon>Pseudomonadota</taxon>
        <taxon>Gammaproteobacteria</taxon>
        <taxon>Enterobacterales</taxon>
        <taxon>Enterobacteriaceae</taxon>
        <taxon>Salmonella</taxon>
    </lineage>
</organism>
<feature type="chain" id="PRO_0000374985" description="Ribosomal protein uS12 methylthiotransferase RimO">
    <location>
        <begin position="1"/>
        <end position="441"/>
    </location>
</feature>
<feature type="domain" description="MTTase N-terminal" evidence="1">
    <location>
        <begin position="8"/>
        <end position="118"/>
    </location>
</feature>
<feature type="domain" description="Radical SAM core" evidence="2">
    <location>
        <begin position="136"/>
        <end position="373"/>
    </location>
</feature>
<feature type="domain" description="TRAM" evidence="1">
    <location>
        <begin position="376"/>
        <end position="441"/>
    </location>
</feature>
<feature type="binding site" evidence="1">
    <location>
        <position position="17"/>
    </location>
    <ligand>
        <name>[4Fe-4S] cluster</name>
        <dbReference type="ChEBI" id="CHEBI:49883"/>
        <label>1</label>
    </ligand>
</feature>
<feature type="binding site" evidence="1">
    <location>
        <position position="53"/>
    </location>
    <ligand>
        <name>[4Fe-4S] cluster</name>
        <dbReference type="ChEBI" id="CHEBI:49883"/>
        <label>1</label>
    </ligand>
</feature>
<feature type="binding site" evidence="1">
    <location>
        <position position="82"/>
    </location>
    <ligand>
        <name>[4Fe-4S] cluster</name>
        <dbReference type="ChEBI" id="CHEBI:49883"/>
        <label>1</label>
    </ligand>
</feature>
<feature type="binding site" evidence="1">
    <location>
        <position position="150"/>
    </location>
    <ligand>
        <name>[4Fe-4S] cluster</name>
        <dbReference type="ChEBI" id="CHEBI:49883"/>
        <label>2</label>
        <note>4Fe-4S-S-AdoMet</note>
    </ligand>
</feature>
<feature type="binding site" evidence="1">
    <location>
        <position position="154"/>
    </location>
    <ligand>
        <name>[4Fe-4S] cluster</name>
        <dbReference type="ChEBI" id="CHEBI:49883"/>
        <label>2</label>
        <note>4Fe-4S-S-AdoMet</note>
    </ligand>
</feature>
<feature type="binding site" evidence="1">
    <location>
        <position position="157"/>
    </location>
    <ligand>
        <name>[4Fe-4S] cluster</name>
        <dbReference type="ChEBI" id="CHEBI:49883"/>
        <label>2</label>
        <note>4Fe-4S-S-AdoMet</note>
    </ligand>
</feature>
<comment type="function">
    <text evidence="1">Catalyzes the methylthiolation of an aspartic acid residue of ribosomal protein uS12.</text>
</comment>
<comment type="catalytic activity">
    <reaction evidence="1">
        <text>L-aspartate(89)-[ribosomal protein uS12]-hydrogen + (sulfur carrier)-SH + AH2 + 2 S-adenosyl-L-methionine = 3-methylsulfanyl-L-aspartate(89)-[ribosomal protein uS12]-hydrogen + (sulfur carrier)-H + 5'-deoxyadenosine + L-methionine + A + S-adenosyl-L-homocysteine + 2 H(+)</text>
        <dbReference type="Rhea" id="RHEA:37087"/>
        <dbReference type="Rhea" id="RHEA-COMP:10460"/>
        <dbReference type="Rhea" id="RHEA-COMP:10461"/>
        <dbReference type="Rhea" id="RHEA-COMP:14737"/>
        <dbReference type="Rhea" id="RHEA-COMP:14739"/>
        <dbReference type="ChEBI" id="CHEBI:13193"/>
        <dbReference type="ChEBI" id="CHEBI:15378"/>
        <dbReference type="ChEBI" id="CHEBI:17319"/>
        <dbReference type="ChEBI" id="CHEBI:17499"/>
        <dbReference type="ChEBI" id="CHEBI:29917"/>
        <dbReference type="ChEBI" id="CHEBI:29961"/>
        <dbReference type="ChEBI" id="CHEBI:57844"/>
        <dbReference type="ChEBI" id="CHEBI:57856"/>
        <dbReference type="ChEBI" id="CHEBI:59789"/>
        <dbReference type="ChEBI" id="CHEBI:64428"/>
        <dbReference type="ChEBI" id="CHEBI:73599"/>
        <dbReference type="EC" id="2.8.4.4"/>
    </reaction>
</comment>
<comment type="cofactor">
    <cofactor evidence="1">
        <name>[4Fe-4S] cluster</name>
        <dbReference type="ChEBI" id="CHEBI:49883"/>
    </cofactor>
    <text evidence="1">Binds 2 [4Fe-4S] clusters. One cluster is coordinated with 3 cysteines and an exchangeable S-adenosyl-L-methionine.</text>
</comment>
<comment type="subcellular location">
    <subcellularLocation>
        <location evidence="1">Cytoplasm</location>
    </subcellularLocation>
</comment>
<comment type="similarity">
    <text evidence="1">Belongs to the methylthiotransferase family. RimO subfamily.</text>
</comment>
<proteinExistence type="inferred from homology"/>
<dbReference type="EC" id="2.8.4.4" evidence="1"/>
<dbReference type="EMBL" id="CP001138">
    <property type="protein sequence ID" value="ACH51090.1"/>
    <property type="molecule type" value="Genomic_DNA"/>
</dbReference>
<dbReference type="RefSeq" id="WP_000073317.1">
    <property type="nucleotide sequence ID" value="NC_011149.1"/>
</dbReference>
<dbReference type="SMR" id="B5F0X7"/>
<dbReference type="KEGG" id="sea:SeAg_B0894"/>
<dbReference type="HOGENOM" id="CLU_018697_0_0_6"/>
<dbReference type="Proteomes" id="UP000008819">
    <property type="component" value="Chromosome"/>
</dbReference>
<dbReference type="GO" id="GO:0005829">
    <property type="term" value="C:cytosol"/>
    <property type="evidence" value="ECO:0007669"/>
    <property type="project" value="TreeGrafter"/>
</dbReference>
<dbReference type="GO" id="GO:0051539">
    <property type="term" value="F:4 iron, 4 sulfur cluster binding"/>
    <property type="evidence" value="ECO:0007669"/>
    <property type="project" value="UniProtKB-UniRule"/>
</dbReference>
<dbReference type="GO" id="GO:0035599">
    <property type="term" value="F:aspartic acid methylthiotransferase activity"/>
    <property type="evidence" value="ECO:0007669"/>
    <property type="project" value="TreeGrafter"/>
</dbReference>
<dbReference type="GO" id="GO:0046872">
    <property type="term" value="F:metal ion binding"/>
    <property type="evidence" value="ECO:0007669"/>
    <property type="project" value="UniProtKB-KW"/>
</dbReference>
<dbReference type="GO" id="GO:0103039">
    <property type="term" value="F:protein methylthiotransferase activity"/>
    <property type="evidence" value="ECO:0007669"/>
    <property type="project" value="UniProtKB-EC"/>
</dbReference>
<dbReference type="GO" id="GO:0006400">
    <property type="term" value="P:tRNA modification"/>
    <property type="evidence" value="ECO:0007669"/>
    <property type="project" value="InterPro"/>
</dbReference>
<dbReference type="CDD" id="cd01335">
    <property type="entry name" value="Radical_SAM"/>
    <property type="match status" value="1"/>
</dbReference>
<dbReference type="FunFam" id="2.40.50.140:FF:000060">
    <property type="entry name" value="Ribosomal protein S12 methylthiotransferase RimO"/>
    <property type="match status" value="1"/>
</dbReference>
<dbReference type="FunFam" id="3.40.50.12160:FF:000002">
    <property type="entry name" value="Ribosomal protein S12 methylthiotransferase RimO"/>
    <property type="match status" value="1"/>
</dbReference>
<dbReference type="FunFam" id="3.80.30.20:FF:000001">
    <property type="entry name" value="tRNA-2-methylthio-N(6)-dimethylallyladenosine synthase 2"/>
    <property type="match status" value="1"/>
</dbReference>
<dbReference type="Gene3D" id="3.40.50.12160">
    <property type="entry name" value="Methylthiotransferase, N-terminal domain"/>
    <property type="match status" value="1"/>
</dbReference>
<dbReference type="Gene3D" id="2.40.50.140">
    <property type="entry name" value="Nucleic acid-binding proteins"/>
    <property type="match status" value="1"/>
</dbReference>
<dbReference type="Gene3D" id="3.80.30.20">
    <property type="entry name" value="tm_1862 like domain"/>
    <property type="match status" value="1"/>
</dbReference>
<dbReference type="HAMAP" id="MF_01865">
    <property type="entry name" value="MTTase_RimO"/>
    <property type="match status" value="1"/>
</dbReference>
<dbReference type="InterPro" id="IPR006638">
    <property type="entry name" value="Elp3/MiaA/NifB-like_rSAM"/>
</dbReference>
<dbReference type="InterPro" id="IPR005839">
    <property type="entry name" value="Methylthiotransferase"/>
</dbReference>
<dbReference type="InterPro" id="IPR020612">
    <property type="entry name" value="Methylthiotransferase_CS"/>
</dbReference>
<dbReference type="InterPro" id="IPR013848">
    <property type="entry name" value="Methylthiotransferase_N"/>
</dbReference>
<dbReference type="InterPro" id="IPR038135">
    <property type="entry name" value="Methylthiotransferase_N_sf"/>
</dbReference>
<dbReference type="InterPro" id="IPR012340">
    <property type="entry name" value="NA-bd_OB-fold"/>
</dbReference>
<dbReference type="InterPro" id="IPR005840">
    <property type="entry name" value="Ribosomal_uS12_MeSTrfase_RimO"/>
</dbReference>
<dbReference type="InterPro" id="IPR007197">
    <property type="entry name" value="rSAM"/>
</dbReference>
<dbReference type="InterPro" id="IPR023404">
    <property type="entry name" value="rSAM_horseshoe"/>
</dbReference>
<dbReference type="InterPro" id="IPR002792">
    <property type="entry name" value="TRAM_dom"/>
</dbReference>
<dbReference type="NCBIfam" id="TIGR01125">
    <property type="entry name" value="30S ribosomal protein S12 methylthiotransferase RimO"/>
    <property type="match status" value="1"/>
</dbReference>
<dbReference type="NCBIfam" id="TIGR00089">
    <property type="entry name" value="MiaB/RimO family radical SAM methylthiotransferase"/>
    <property type="match status" value="1"/>
</dbReference>
<dbReference type="PANTHER" id="PTHR43837">
    <property type="entry name" value="RIBOSOMAL PROTEIN S12 METHYLTHIOTRANSFERASE RIMO"/>
    <property type="match status" value="1"/>
</dbReference>
<dbReference type="PANTHER" id="PTHR43837:SF1">
    <property type="entry name" value="RIBOSOMAL PROTEIN US12 METHYLTHIOTRANSFERASE RIMO"/>
    <property type="match status" value="1"/>
</dbReference>
<dbReference type="Pfam" id="PF04055">
    <property type="entry name" value="Radical_SAM"/>
    <property type="match status" value="1"/>
</dbReference>
<dbReference type="Pfam" id="PF18693">
    <property type="entry name" value="TRAM_2"/>
    <property type="match status" value="1"/>
</dbReference>
<dbReference type="Pfam" id="PF00919">
    <property type="entry name" value="UPF0004"/>
    <property type="match status" value="1"/>
</dbReference>
<dbReference type="SFLD" id="SFLDG01082">
    <property type="entry name" value="B12-binding_domain_containing"/>
    <property type="match status" value="1"/>
</dbReference>
<dbReference type="SFLD" id="SFLDG01061">
    <property type="entry name" value="methylthiotransferase"/>
    <property type="match status" value="1"/>
</dbReference>
<dbReference type="SFLD" id="SFLDF00274">
    <property type="entry name" value="ribosomal_protein_S12_methylth"/>
    <property type="match status" value="1"/>
</dbReference>
<dbReference type="SMART" id="SM00729">
    <property type="entry name" value="Elp3"/>
    <property type="match status" value="1"/>
</dbReference>
<dbReference type="SUPFAM" id="SSF102114">
    <property type="entry name" value="Radical SAM enzymes"/>
    <property type="match status" value="1"/>
</dbReference>
<dbReference type="PROSITE" id="PS51449">
    <property type="entry name" value="MTTASE_N"/>
    <property type="match status" value="1"/>
</dbReference>
<dbReference type="PROSITE" id="PS01278">
    <property type="entry name" value="MTTASE_RADICAL"/>
    <property type="match status" value="1"/>
</dbReference>
<dbReference type="PROSITE" id="PS51918">
    <property type="entry name" value="RADICAL_SAM"/>
    <property type="match status" value="1"/>
</dbReference>
<dbReference type="PROSITE" id="PS50926">
    <property type="entry name" value="TRAM"/>
    <property type="match status" value="1"/>
</dbReference>
<sequence>MSNVTHQPKIGFVSLGCPKNLVDSERILTELRTEGYDVVPRYDDADMVIVNTCGFIDSAVQESLEAIGEALNENGKVIVTGCLGAKEDQIREVHPKVLEITGPHSYEQVLQHVHHYVPKPKHNPFLSLVPEQGVKLTPRHYAYLKISEGCNHRCTFCIIPSMRGDLVSRPIGDVLSEAKRLVDAGVKEILVISQDTSAYGVDVKHRTGFHNGEPVKTSMVSLCEQLSKLGVWTRLHYVYPYPHVDDVIPLMAEGKILPYLDIPLQHASPRILKLMKRPGSVDRQLARIKQWREICPELTLRSTFIVGFPGETEEDFQMLLDFLKEARLDRVGCFKYSPVEGAGANELPDQVPEEVKEERWNRFMQLQQQISAERLQEKVGREILVIVDEVDEEGAIGRSMADAPEIDGAVYLNGETNVKPGDIVRVKVENADEYDLWGSRV</sequence>
<name>RIMO_SALA4</name>
<protein>
    <recommendedName>
        <fullName evidence="1">Ribosomal protein uS12 methylthiotransferase RimO</fullName>
        <shortName evidence="1">uS12 MTTase</shortName>
        <shortName evidence="1">uS12 methylthiotransferase</shortName>
        <ecNumber evidence="1">2.8.4.4</ecNumber>
    </recommendedName>
    <alternativeName>
        <fullName evidence="1">Ribosomal protein uS12 (aspartate-C(3))-methylthiotransferase</fullName>
    </alternativeName>
    <alternativeName>
        <fullName evidence="1">Ribosome maturation factor RimO</fullName>
    </alternativeName>
</protein>
<evidence type="ECO:0000255" key="1">
    <source>
        <dbReference type="HAMAP-Rule" id="MF_01865"/>
    </source>
</evidence>
<evidence type="ECO:0000255" key="2">
    <source>
        <dbReference type="PROSITE-ProRule" id="PRU01266"/>
    </source>
</evidence>
<gene>
    <name evidence="1" type="primary">rimO</name>
    <name type="ordered locus">SeAg_B0894</name>
</gene>
<reference key="1">
    <citation type="journal article" date="2011" name="J. Bacteriol.">
        <title>Comparative genomics of 28 Salmonella enterica isolates: evidence for CRISPR-mediated adaptive sublineage evolution.</title>
        <authorList>
            <person name="Fricke W.F."/>
            <person name="Mammel M.K."/>
            <person name="McDermott P.F."/>
            <person name="Tartera C."/>
            <person name="White D.G."/>
            <person name="Leclerc J.E."/>
            <person name="Ravel J."/>
            <person name="Cebula T.A."/>
        </authorList>
    </citation>
    <scope>NUCLEOTIDE SEQUENCE [LARGE SCALE GENOMIC DNA]</scope>
    <source>
        <strain>SL483</strain>
    </source>
</reference>